<reference key="1">
    <citation type="journal article" date="1993" name="Plant Cell Physiol.">
        <title>Nucleotide sequence and genetic analysis of the region essential for functional expression of the gene for ferredoxin I, fdxN, in Rhodobacter capsulatus: sharing of one upstream activator sequence in opposite directions by two operons related to nitrogen fixation.</title>
        <authorList>
            <person name="Saeki K."/>
            <person name="Tokuda K."/>
            <person name="Fujiwara T."/>
            <person name="Matsubara H."/>
        </authorList>
    </citation>
    <scope>NUCLEOTIDE SEQUENCE [GENOMIC DNA]</scope>
    <source>
        <strain>ATCC BAA-309 / NBRC 16581 / SB1003</strain>
    </source>
</reference>
<reference key="2">
    <citation type="journal article" date="2010" name="J. Bacteriol.">
        <title>Complete genome sequence of the photosynthetic purple nonsulfur bacterium Rhodobacter capsulatus SB 1003.</title>
        <authorList>
            <person name="Strnad H."/>
            <person name="Lapidus A."/>
            <person name="Paces J."/>
            <person name="Ulbrich P."/>
            <person name="Vlcek C."/>
            <person name="Paces V."/>
            <person name="Haselkorn R."/>
        </authorList>
    </citation>
    <scope>NUCLEOTIDE SEQUENCE [LARGE SCALE GENOMIC DNA]</scope>
    <source>
        <strain>ATCC BAA-309 / NBRC 16581 / SB1003</strain>
    </source>
</reference>
<reference key="3">
    <citation type="journal article" date="1997" name="Biochemistry">
        <title>Membrane localization, topology, and mutual stabilization of the rnfABC gene products in Rhodobacter capsulatus and implications for a new family of energy-coupling NADH oxidoreductases.</title>
        <authorList>
            <person name="Kumagai H."/>
            <person name="Fujiwara T."/>
            <person name="Matsubara H."/>
            <person name="Saeki K."/>
        </authorList>
    </citation>
    <scope>FUNCTION</scope>
    <scope>SUBCELLULAR LOCATION</scope>
    <scope>TOPOLOGY</scope>
    <source>
        <strain>ATCC BAA-309 / NBRC 16581 / SB1003</strain>
    </source>
</reference>
<name>RNFA_RHOCB</name>
<protein>
    <recommendedName>
        <fullName evidence="1 4">Ion-translocating oxidoreductase complex subunit A</fullName>
        <ecNumber evidence="1 4">7.-.-.-</ecNumber>
    </recommendedName>
    <alternativeName>
        <fullName evidence="4">Nitrogen fixation protein RnfA</fullName>
    </alternativeName>
    <alternativeName>
        <fullName evidence="1 4">Rnf electron transport complex subunit A</fullName>
    </alternativeName>
</protein>
<feature type="chain" id="PRO_0000410700" description="Ion-translocating oxidoreductase complex subunit A">
    <location>
        <begin position="1"/>
        <end position="193"/>
    </location>
</feature>
<feature type="topological domain" description="Periplasmic" evidence="5">
    <location>
        <begin position="1"/>
        <end position="3"/>
    </location>
</feature>
<feature type="transmembrane region" description="Helical" evidence="1">
    <location>
        <begin position="4"/>
        <end position="24"/>
    </location>
</feature>
<feature type="topological domain" description="Cytoplasmic" evidence="5">
    <location>
        <begin position="25"/>
        <end position="38"/>
    </location>
</feature>
<feature type="transmembrane region" description="Helical" evidence="1">
    <location>
        <begin position="39"/>
        <end position="59"/>
    </location>
</feature>
<feature type="topological domain" description="Periplasmic" evidence="5">
    <location>
        <begin position="60"/>
        <end position="70"/>
    </location>
</feature>
<feature type="transmembrane region" description="Helical" evidence="1">
    <location>
        <begin position="71"/>
        <end position="91"/>
    </location>
</feature>
<feature type="topological domain" description="Cytoplasmic" evidence="5">
    <location>
        <begin position="92"/>
        <end position="101"/>
    </location>
</feature>
<feature type="transmembrane region" description="Helical" evidence="1">
    <location>
        <begin position="102"/>
        <end position="122"/>
    </location>
</feature>
<feature type="topological domain" description="Periplasmic" evidence="5">
    <location>
        <begin position="123"/>
        <end position="133"/>
    </location>
</feature>
<feature type="transmembrane region" description="Helical" evidence="1">
    <location>
        <begin position="134"/>
        <end position="154"/>
    </location>
</feature>
<feature type="topological domain" description="Cytoplasmic" evidence="5">
    <location>
        <begin position="155"/>
        <end position="170"/>
    </location>
</feature>
<feature type="transmembrane region" description="Helical" evidence="1">
    <location>
        <begin position="171"/>
        <end position="191"/>
    </location>
</feature>
<feature type="topological domain" description="Periplasmic" evidence="2">
    <location>
        <begin position="192"/>
        <end position="193"/>
    </location>
</feature>
<dbReference type="EC" id="7.-.-.-" evidence="1 4"/>
<dbReference type="EMBL" id="D13625">
    <property type="protein sequence ID" value="BAA02788.1"/>
    <property type="molecule type" value="Genomic_DNA"/>
</dbReference>
<dbReference type="EMBL" id="CP001312">
    <property type="protein sequence ID" value="ADE87011.1"/>
    <property type="molecule type" value="Genomic_DNA"/>
</dbReference>
<dbReference type="SMR" id="D5ARY9"/>
<dbReference type="STRING" id="272942.RCAP_rcc03287"/>
<dbReference type="GeneID" id="31492067"/>
<dbReference type="KEGG" id="rcp:RCAP_rcc03287"/>
<dbReference type="eggNOG" id="COG4657">
    <property type="taxonomic scope" value="Bacteria"/>
</dbReference>
<dbReference type="HOGENOM" id="CLU_095255_1_0_5"/>
<dbReference type="OrthoDB" id="9803631at2"/>
<dbReference type="Proteomes" id="UP000002361">
    <property type="component" value="Chromosome"/>
</dbReference>
<dbReference type="GO" id="GO:0005886">
    <property type="term" value="C:plasma membrane"/>
    <property type="evidence" value="ECO:0007669"/>
    <property type="project" value="UniProtKB-UniRule"/>
</dbReference>
<dbReference type="GO" id="GO:0042717">
    <property type="term" value="C:plasma membrane-derived chromatophore membrane"/>
    <property type="evidence" value="ECO:0007669"/>
    <property type="project" value="UniProtKB-SubCell"/>
</dbReference>
<dbReference type="GO" id="GO:0022900">
    <property type="term" value="P:electron transport chain"/>
    <property type="evidence" value="ECO:0007669"/>
    <property type="project" value="UniProtKB-UniRule"/>
</dbReference>
<dbReference type="GO" id="GO:0009399">
    <property type="term" value="P:nitrogen fixation"/>
    <property type="evidence" value="ECO:0007669"/>
    <property type="project" value="UniProtKB-KW"/>
</dbReference>
<dbReference type="HAMAP" id="MF_00459">
    <property type="entry name" value="RsxA_RnfA"/>
    <property type="match status" value="1"/>
</dbReference>
<dbReference type="InterPro" id="IPR011293">
    <property type="entry name" value="Ion_transpt_RnfA/RsxA"/>
</dbReference>
<dbReference type="InterPro" id="IPR003667">
    <property type="entry name" value="NqrDE/RnfAE"/>
</dbReference>
<dbReference type="InterPro" id="IPR050133">
    <property type="entry name" value="NqrDE/RnfAE_oxidrdctase"/>
</dbReference>
<dbReference type="NCBIfam" id="NF003481">
    <property type="entry name" value="PRK05151.1"/>
    <property type="match status" value="1"/>
</dbReference>
<dbReference type="NCBIfam" id="TIGR01943">
    <property type="entry name" value="rnfA"/>
    <property type="match status" value="1"/>
</dbReference>
<dbReference type="PANTHER" id="PTHR30335">
    <property type="entry name" value="INTEGRAL MEMBRANE PROTEIN OF SOXR-REDUCING COMPLEX"/>
    <property type="match status" value="1"/>
</dbReference>
<dbReference type="PANTHER" id="PTHR30335:SF0">
    <property type="entry name" value="ION-TRANSLOCATING OXIDOREDUCTASE COMPLEX SUBUNIT A"/>
    <property type="match status" value="1"/>
</dbReference>
<dbReference type="Pfam" id="PF02508">
    <property type="entry name" value="Rnf-Nqr"/>
    <property type="match status" value="1"/>
</dbReference>
<dbReference type="PIRSF" id="PIRSF006102">
    <property type="entry name" value="NQR_DE"/>
    <property type="match status" value="1"/>
</dbReference>
<evidence type="ECO:0000255" key="1">
    <source>
        <dbReference type="HAMAP-Rule" id="MF_00459"/>
    </source>
</evidence>
<evidence type="ECO:0000269" key="2">
    <source>
    </source>
</evidence>
<evidence type="ECO:0000303" key="3">
    <source>
    </source>
</evidence>
<evidence type="ECO:0000305" key="4"/>
<evidence type="ECO:0000305" key="5">
    <source>
    </source>
</evidence>
<keyword id="KW-0249">Electron transport</keyword>
<keyword id="KW-0472">Membrane</keyword>
<keyword id="KW-0535">Nitrogen fixation</keyword>
<keyword id="KW-1185">Reference proteome</keyword>
<keyword id="KW-1278">Translocase</keyword>
<keyword id="KW-0812">Transmembrane</keyword>
<keyword id="KW-1133">Transmembrane helix</keyword>
<keyword id="KW-0813">Transport</keyword>
<gene>
    <name evidence="1 3" type="primary">rnfA</name>
    <name type="ordered locus">RCAP_rcc03287</name>
</gene>
<proteinExistence type="evidence at protein level"/>
<comment type="function">
    <text evidence="1 2">Part of a membrane-bound complex that couples electron transfer with translocation of ions across the membrane (By similarity). Required for nitrogen fixation. Necessary for stable existence of both RnfB and RnfC (PubMed:9154934).</text>
</comment>
<comment type="subunit">
    <text evidence="1">The complex is composed of six subunits: RnfA, RnfB, RnfC, RnfD, RnfE and RnfG.</text>
</comment>
<comment type="subcellular location">
    <subcellularLocation>
        <location evidence="1 2">Cellular chromatophore membrane</location>
        <topology evidence="1 2">Multi-pass membrane protein</topology>
    </subcellularLocation>
</comment>
<comment type="similarity">
    <text evidence="1">Belongs to the NqrDE/RnfAE family.</text>
</comment>
<organism>
    <name type="scientific">Rhodobacter capsulatus (strain ATCC BAA-309 / NBRC 16581 / SB1003)</name>
    <dbReference type="NCBI Taxonomy" id="272942"/>
    <lineage>
        <taxon>Bacteria</taxon>
        <taxon>Pseudomonadati</taxon>
        <taxon>Pseudomonadota</taxon>
        <taxon>Alphaproteobacteria</taxon>
        <taxon>Rhodobacterales</taxon>
        <taxon>Rhodobacter group</taxon>
        <taxon>Rhodobacter</taxon>
    </lineage>
</organism>
<sequence length="193" mass="20424">MQDFLLVLLSTALVNNVVLVKFLGLCPFMGVSRKTDAAIGMGLATTFVITVASAACWLVEALILEPLDLKFLRILSMILVIAAIVQFIETVMRKVTPDLHKALGIYLPLITTNCAVLGLPLMYIQGHLSLAMSTLSGFGASVGFTLVLVIFAGMRERLAQLSVPAAFAGTPIAFVSAGLLGLAFMGFAGLVHV</sequence>
<accession>D5ARY9</accession>
<accession>Q07396</accession>